<evidence type="ECO:0000269" key="1">
    <source>
    </source>
</evidence>
<evidence type="ECO:0000269" key="2">
    <source>
    </source>
</evidence>
<evidence type="ECO:0000303" key="3">
    <source>
    </source>
</evidence>
<evidence type="ECO:0000303" key="4">
    <source>
    </source>
</evidence>
<evidence type="ECO:0000305" key="5"/>
<evidence type="ECO:0000305" key="6">
    <source>
    </source>
</evidence>
<evidence type="ECO:0000312" key="7">
    <source>
        <dbReference type="EMBL" id="ABI15941.1"/>
    </source>
</evidence>
<evidence type="ECO:0000312" key="8">
    <source>
        <dbReference type="EMBL" id="ABI20172.1"/>
    </source>
</evidence>
<feature type="signal peptide" evidence="1">
    <location>
        <begin position="1"/>
        <end position="18"/>
    </location>
</feature>
<feature type="chain" id="PRO_0000461691" description="Yellow-related salivary protein M35" evidence="5">
    <location>
        <begin position="19"/>
        <end position="395"/>
    </location>
</feature>
<feature type="sequence variant" evidence="1">
    <original>R</original>
    <variation>S</variation>
    <location>
        <position position="36"/>
    </location>
</feature>
<feature type="sequence variant" evidence="1">
    <original>K</original>
    <variation>E</variation>
    <location>
        <position position="128"/>
    </location>
</feature>
<feature type="sequence variant" evidence="1">
    <original>D</original>
    <variation>N</variation>
    <location>
        <position position="150"/>
    </location>
</feature>
<feature type="sequence variant" evidence="1">
    <original>D</original>
    <variation>N</variation>
    <location>
        <position position="162"/>
    </location>
</feature>
<feature type="sequence variant" evidence="1">
    <original>ELK</original>
    <variation>KLE</variation>
    <location>
        <begin position="236"/>
        <end position="238"/>
    </location>
</feature>
<organism evidence="7">
    <name type="scientific">Phlebotomus duboscqi</name>
    <name type="common">Sandfly</name>
    <dbReference type="NCBI Taxonomy" id="37738"/>
    <lineage>
        <taxon>Eukaryota</taxon>
        <taxon>Metazoa</taxon>
        <taxon>Ecdysozoa</taxon>
        <taxon>Arthropoda</taxon>
        <taxon>Hexapoda</taxon>
        <taxon>Insecta</taxon>
        <taxon>Pterygota</taxon>
        <taxon>Neoptera</taxon>
        <taxon>Endopterygota</taxon>
        <taxon>Diptera</taxon>
        <taxon>Nematocera</taxon>
        <taxon>Psychodoidea</taxon>
        <taxon>Psychodidae</taxon>
        <taxon>Phlebotomus</taxon>
        <taxon>Phlebotomus</taxon>
    </lineage>
</organism>
<dbReference type="EMBL" id="DQ826522">
    <property type="protein sequence ID" value="ABI15941.1"/>
    <property type="molecule type" value="mRNA"/>
</dbReference>
<dbReference type="EMBL" id="DQ835367">
    <property type="protein sequence ID" value="ABI20172.1"/>
    <property type="molecule type" value="mRNA"/>
</dbReference>
<dbReference type="GO" id="GO:0005576">
    <property type="term" value="C:extracellular region"/>
    <property type="evidence" value="ECO:0007669"/>
    <property type="project" value="UniProtKB-SubCell"/>
</dbReference>
<dbReference type="Gene3D" id="2.120.10.30">
    <property type="entry name" value="TolB, C-terminal domain"/>
    <property type="match status" value="1"/>
</dbReference>
<dbReference type="InterPro" id="IPR011042">
    <property type="entry name" value="6-blade_b-propeller_TolB-like"/>
</dbReference>
<dbReference type="InterPro" id="IPR017996">
    <property type="entry name" value="Royal_jelly/protein_yellow"/>
</dbReference>
<dbReference type="PANTHER" id="PTHR10009:SF18">
    <property type="entry name" value="PROTEIN YELLOW-LIKE PROTEIN"/>
    <property type="match status" value="1"/>
</dbReference>
<dbReference type="PANTHER" id="PTHR10009">
    <property type="entry name" value="PROTEIN YELLOW-RELATED"/>
    <property type="match status" value="1"/>
</dbReference>
<dbReference type="Pfam" id="PF03022">
    <property type="entry name" value="MRJP"/>
    <property type="match status" value="1"/>
</dbReference>
<dbReference type="SUPFAM" id="SSF63829">
    <property type="entry name" value="Calcium-dependent phosphotriesterase"/>
    <property type="match status" value="1"/>
</dbReference>
<gene>
    <name evidence="7" type="primary">M35</name>
    <name evidence="8" type="synonym">K06</name>
</gene>
<protein>
    <recommendedName>
        <fullName evidence="5">Yellow-related salivary protein M35</fullName>
    </recommendedName>
    <alternativeName>
        <fullName evidence="3 4">PduM35</fullName>
    </alternativeName>
</protein>
<name>YP35_PHLDU</name>
<sequence length="395" mass="44540">MKLILTVLAFLSLQVALSDDVGRLYEWSKIDIVGVRPSVYDSSNIIPTGVAYDADSKMLFFGLPRKYSKVPITVAQLSTRSYNSAERRDPPLDKFSGKSKKPLTSVYQPVIDDCRRLWVLDVGIVEVKAERKTYPTKNPALVAFDLTKPDYPEIHRYELTGDAAKTPLGYGGFAVDVVNPKKCGKNDEKTYVYIANFVENSLIVYDKKKSDAWVLKDDSFKPEGVSTYTHNGKEHELKTGIFGIALGDRNKEGNRPAYYLAGSSTKLYRLDTKLLKKKGSKLVPKLIGDRGYKTEAIALAYDPETKVLFFAETDSRQVSCWNIKKELKPENVGVIYSSAKLNFATDMMVDSKGFLWFMSNGQPPFDEKMKYEDPHIRLMKVKTKKAIKGEKRCQG</sequence>
<keyword id="KW-0903">Direct protein sequencing</keyword>
<keyword id="KW-0964">Secreted</keyword>
<keyword id="KW-0732">Signal</keyword>
<proteinExistence type="evidence at protein level"/>
<comment type="function">
    <text evidence="2 5">Probably modulates blood feeding of sand flies on vertebrate species by binding and sequestering different mediators involved in the host response (Probable). Functions as a chemoattractant for host neutrophils; likely acts through a G-protein-coupled receptor and effect is dependent on calcium influx and phosphatidylinositol 3-kinases (PI3K) activity (PubMed:34050141).</text>
</comment>
<comment type="function">
    <text evidence="6">(Microbial infection) Probably enhances infection caused by Leishmania species in the host through augmentation of host neutrophil recruitment into the skin.</text>
</comment>
<comment type="subcellular location">
    <subcellularLocation>
        <location evidence="5">Secreted</location>
    </subcellularLocation>
</comment>
<comment type="tissue specificity">
    <text evidence="1 2">Salivary gland (at protein level).</text>
</comment>
<comment type="miscellaneous">
    <text evidence="2">Exacerbates Leishmania infection in mice when co-injected with parasites and yellow-related salivary protein M10.</text>
</comment>
<comment type="similarity">
    <text evidence="5">Belongs to the major royal jelly protein family.</text>
</comment>
<reference evidence="7 8" key="1">
    <citation type="journal article" date="2006" name="BMC Genomics">
        <title>High degree of conservancy among secreted salivary gland proteins from two geographically distant Phlebotomus duboscqi sandflies populations (Mali and Kenya).</title>
        <authorList>
            <person name="Kato H."/>
            <person name="Anderson J.M."/>
            <person name="Kamhawi S."/>
            <person name="Oliveira F."/>
            <person name="Lawyer P.G."/>
            <person name="Pham V.M."/>
            <person name="Sangare C.S."/>
            <person name="Samake S."/>
            <person name="Sissoko I."/>
            <person name="Garfield M."/>
            <person name="Sigutova L."/>
            <person name="Volf P."/>
            <person name="Doumbia S."/>
            <person name="Valenzuela J.G."/>
        </authorList>
    </citation>
    <scope>NUCLEOTIDE SEQUENCE [LARGE SCALE MRNA]</scope>
    <scope>PROTEIN SEQUENCE OF 19-33</scope>
    <scope>TISSUE SPECIFICITY</scope>
    <scope>VARIANTS SER-36; GLU-128; ASN-150; ASN-162 AND 236-GLU--LYS-238 DELINS LYS-LEU-GLU</scope>
    <source>
        <strain evidence="8">Kenya</strain>
        <strain evidence="7">Mali</strain>
    </source>
</reference>
<reference evidence="5" key="2">
    <citation type="journal article" date="2021" name="Nat. Commun.">
        <title>A sand fly salivary protein acts as a neutrophil chemoattractant.</title>
        <authorList>
            <person name="Guimaraes-Costa A.B."/>
            <person name="Shannon J.P."/>
            <person name="Waclawiak I."/>
            <person name="Oliveira J."/>
            <person name="Meneses C."/>
            <person name="de Castro W."/>
            <person name="Wen X."/>
            <person name="Brzostowski J."/>
            <person name="Serafim T.D."/>
            <person name="Andersen J.F."/>
            <person name="Hickman H.D."/>
            <person name="Kamhawi S."/>
            <person name="Valenzuela J.G."/>
            <person name="Oliveira F."/>
        </authorList>
    </citation>
    <scope>FUNCTION</scope>
    <scope>FUNCTION (MICROBIAL INFECTION)</scope>
    <scope>TISSUE SPECIFICITY</scope>
</reference>
<accession>Q06K97</accession>
<accession>Q06K51</accession>